<organism>
    <name type="scientific">Phaseolus vulgaris</name>
    <name type="common">Kidney bean</name>
    <name type="synonym">French bean</name>
    <dbReference type="NCBI Taxonomy" id="3885"/>
    <lineage>
        <taxon>Eukaryota</taxon>
        <taxon>Viridiplantae</taxon>
        <taxon>Streptophyta</taxon>
        <taxon>Embryophyta</taxon>
        <taxon>Tracheophyta</taxon>
        <taxon>Spermatophyta</taxon>
        <taxon>Magnoliopsida</taxon>
        <taxon>eudicotyledons</taxon>
        <taxon>Gunneridae</taxon>
        <taxon>Pentapetalae</taxon>
        <taxon>rosids</taxon>
        <taxon>fabids</taxon>
        <taxon>Fabales</taxon>
        <taxon>Fabaceae</taxon>
        <taxon>Papilionoideae</taxon>
        <taxon>50 kb inversion clade</taxon>
        <taxon>NPAAA clade</taxon>
        <taxon>indigoferoid/millettioid clade</taxon>
        <taxon>Phaseoleae</taxon>
        <taxon>Phaseolus</taxon>
    </lineage>
</organism>
<protein>
    <recommendedName>
        <fullName evidence="2">Cytochrome f</fullName>
    </recommendedName>
</protein>
<name>CYF_PHAVU</name>
<dbReference type="EMBL" id="DQ886273">
    <property type="protein sequence ID" value="ABH88100.1"/>
    <property type="molecule type" value="Genomic_DNA"/>
</dbReference>
<dbReference type="EMBL" id="EU196765">
    <property type="protein sequence ID" value="ABW22769.1"/>
    <property type="molecule type" value="Genomic_DNA"/>
</dbReference>
<dbReference type="RefSeq" id="YP_001122820.1">
    <property type="nucleotide sequence ID" value="NC_009259.1"/>
</dbReference>
<dbReference type="SMR" id="A4GGB9"/>
<dbReference type="GeneID" id="4961779"/>
<dbReference type="KEGG" id="pvu:4961779"/>
<dbReference type="eggNOG" id="ENOG502QPT8">
    <property type="taxonomic scope" value="Eukaryota"/>
</dbReference>
<dbReference type="GO" id="GO:0009535">
    <property type="term" value="C:chloroplast thylakoid membrane"/>
    <property type="evidence" value="ECO:0007669"/>
    <property type="project" value="UniProtKB-SubCell"/>
</dbReference>
<dbReference type="GO" id="GO:0009055">
    <property type="term" value="F:electron transfer activity"/>
    <property type="evidence" value="ECO:0007669"/>
    <property type="project" value="UniProtKB-UniRule"/>
</dbReference>
<dbReference type="GO" id="GO:0020037">
    <property type="term" value="F:heme binding"/>
    <property type="evidence" value="ECO:0007669"/>
    <property type="project" value="InterPro"/>
</dbReference>
<dbReference type="GO" id="GO:0005506">
    <property type="term" value="F:iron ion binding"/>
    <property type="evidence" value="ECO:0007669"/>
    <property type="project" value="InterPro"/>
</dbReference>
<dbReference type="GO" id="GO:0015979">
    <property type="term" value="P:photosynthesis"/>
    <property type="evidence" value="ECO:0007669"/>
    <property type="project" value="UniProtKB-UniRule"/>
</dbReference>
<dbReference type="FunFam" id="1.20.5.700:FF:000001">
    <property type="entry name" value="Cytochrome f"/>
    <property type="match status" value="1"/>
</dbReference>
<dbReference type="FunFam" id="2.40.50.100:FF:000007">
    <property type="entry name" value="Cytochrome f"/>
    <property type="match status" value="1"/>
</dbReference>
<dbReference type="FunFam" id="2.60.40.830:FF:000001">
    <property type="entry name" value="Cytochrome f"/>
    <property type="match status" value="1"/>
</dbReference>
<dbReference type="Gene3D" id="2.40.50.100">
    <property type="match status" value="1"/>
</dbReference>
<dbReference type="Gene3D" id="2.60.40.830">
    <property type="entry name" value="Cytochrome f large domain"/>
    <property type="match status" value="1"/>
</dbReference>
<dbReference type="Gene3D" id="1.20.5.700">
    <property type="entry name" value="Single helix bin"/>
    <property type="match status" value="1"/>
</dbReference>
<dbReference type="HAMAP" id="MF_00610">
    <property type="entry name" value="Cytb6_f_cytF"/>
    <property type="match status" value="1"/>
</dbReference>
<dbReference type="InterPro" id="IPR024058">
    <property type="entry name" value="Cyt-f_TM"/>
</dbReference>
<dbReference type="InterPro" id="IPR002325">
    <property type="entry name" value="Cyt_f"/>
</dbReference>
<dbReference type="InterPro" id="IPR024094">
    <property type="entry name" value="Cyt_f_lg_dom"/>
</dbReference>
<dbReference type="InterPro" id="IPR036826">
    <property type="entry name" value="Cyt_f_lg_dom_sf"/>
</dbReference>
<dbReference type="InterPro" id="IPR011054">
    <property type="entry name" value="Rudment_hybrid_motif"/>
</dbReference>
<dbReference type="PANTHER" id="PTHR33288">
    <property type="match status" value="1"/>
</dbReference>
<dbReference type="PANTHER" id="PTHR33288:SF10">
    <property type="entry name" value="CYTOCHROME F"/>
    <property type="match status" value="1"/>
</dbReference>
<dbReference type="Pfam" id="PF01333">
    <property type="entry name" value="Apocytochr_F_C"/>
    <property type="match status" value="1"/>
</dbReference>
<dbReference type="Pfam" id="PF16639">
    <property type="entry name" value="Apocytochr_F_N"/>
    <property type="match status" value="1"/>
</dbReference>
<dbReference type="PRINTS" id="PR00610">
    <property type="entry name" value="CYTOCHROMEF"/>
</dbReference>
<dbReference type="SUPFAM" id="SSF103431">
    <property type="entry name" value="Cytochrome f subunit of the cytochrome b6f complex, transmembrane anchor"/>
    <property type="match status" value="1"/>
</dbReference>
<dbReference type="SUPFAM" id="SSF49441">
    <property type="entry name" value="Cytochrome f, large domain"/>
    <property type="match status" value="1"/>
</dbReference>
<dbReference type="SUPFAM" id="SSF51246">
    <property type="entry name" value="Rudiment single hybrid motif"/>
    <property type="match status" value="1"/>
</dbReference>
<dbReference type="PROSITE" id="PS51010">
    <property type="entry name" value="CYTF"/>
    <property type="match status" value="1"/>
</dbReference>
<evidence type="ECO:0000250" key="1"/>
<evidence type="ECO:0000255" key="2">
    <source>
        <dbReference type="HAMAP-Rule" id="MF_00610"/>
    </source>
</evidence>
<accession>A4GGB9</accession>
<comment type="function">
    <text evidence="2">Component of the cytochrome b6-f complex, which mediates electron transfer between photosystem II (PSII) and photosystem I (PSI), cyclic electron flow around PSI, and state transitions.</text>
</comment>
<comment type="cofactor">
    <cofactor evidence="2">
        <name>heme</name>
        <dbReference type="ChEBI" id="CHEBI:30413"/>
    </cofactor>
    <text evidence="2">Binds 1 heme group covalently.</text>
</comment>
<comment type="subunit">
    <text evidence="1">The 4 large subunits of the cytochrome b6-f complex are cytochrome b6, subunit IV (17 kDa polypeptide, petD), cytochrome f and the Rieske protein, while the 4 small subunits are PetG, PetL, PetM and PetN. The complex functions as a dimer (By similarity).</text>
</comment>
<comment type="subcellular location">
    <subcellularLocation>
        <location evidence="2">Plastid</location>
        <location evidence="2">Chloroplast thylakoid membrane</location>
        <topology evidence="2">Single-pass membrane protein</topology>
    </subcellularLocation>
</comment>
<comment type="similarity">
    <text evidence="2">Belongs to the cytochrome f family.</text>
</comment>
<geneLocation type="chloroplast"/>
<sequence>MQTRNAFSCIKEGITRSISISVMIYIIIRAPFSNAYPIFAQQGYENPREATGRIVCANCHLANKPVDIEVPQAVLPDTVFEAVVRIPYDMQVKQVLANGKKGTLNVGAVLILPEGFELAPPDRISPEIKEKIGNLSFQNYRPTKKNILVVGPVPGQKYKEITFPILSPDPASKRDIHFLKYPIYVGGNRGRGQIYLDGSKSNNNVYNATAAGIVKKIIRKEKGGYEITIVDTLDEHEVIDIIPPGPELLVSEGESIKLDQPLTSNPNVGGFGQGDAEIVLQDPLRVQGLLFFLASIILAQIFLVLKKKQFEKVQLFEMNF</sequence>
<feature type="signal peptide" evidence="2">
    <location>
        <begin position="1"/>
        <end position="35"/>
    </location>
</feature>
<feature type="chain" id="PRO_0000342080" description="Cytochrome f">
    <location>
        <begin position="36"/>
        <end position="320"/>
    </location>
</feature>
<feature type="transmembrane region" description="Helical" evidence="2">
    <location>
        <begin position="286"/>
        <end position="306"/>
    </location>
</feature>
<feature type="binding site" description="axial binding residue" evidence="2">
    <location>
        <position position="36"/>
    </location>
    <ligand>
        <name>heme</name>
        <dbReference type="ChEBI" id="CHEBI:30413"/>
    </ligand>
    <ligandPart>
        <name>Fe</name>
        <dbReference type="ChEBI" id="CHEBI:18248"/>
    </ligandPart>
</feature>
<feature type="binding site" description="covalent" evidence="2">
    <location>
        <position position="56"/>
    </location>
    <ligand>
        <name>heme</name>
        <dbReference type="ChEBI" id="CHEBI:30413"/>
    </ligand>
</feature>
<feature type="binding site" description="covalent" evidence="2">
    <location>
        <position position="59"/>
    </location>
    <ligand>
        <name>heme</name>
        <dbReference type="ChEBI" id="CHEBI:30413"/>
    </ligand>
</feature>
<feature type="binding site" description="axial binding residue" evidence="2">
    <location>
        <position position="60"/>
    </location>
    <ligand>
        <name>heme</name>
        <dbReference type="ChEBI" id="CHEBI:30413"/>
    </ligand>
    <ligandPart>
        <name>Fe</name>
        <dbReference type="ChEBI" id="CHEBI:18248"/>
    </ligandPart>
</feature>
<keyword id="KW-0150">Chloroplast</keyword>
<keyword id="KW-0249">Electron transport</keyword>
<keyword id="KW-0349">Heme</keyword>
<keyword id="KW-0408">Iron</keyword>
<keyword id="KW-0472">Membrane</keyword>
<keyword id="KW-0479">Metal-binding</keyword>
<keyword id="KW-0602">Photosynthesis</keyword>
<keyword id="KW-0934">Plastid</keyword>
<keyword id="KW-0732">Signal</keyword>
<keyword id="KW-0793">Thylakoid</keyword>
<keyword id="KW-0812">Transmembrane</keyword>
<keyword id="KW-1133">Transmembrane helix</keyword>
<keyword id="KW-0813">Transport</keyword>
<reference key="1">
    <citation type="journal article" date="2007" name="BMC Genomics">
        <title>Rapid evolutionary change of common bean (Phaseolus vulgaris L) plastome, and the genomic diversification of legume chloroplasts.</title>
        <authorList>
            <person name="Guo X."/>
            <person name="Castillo-Ramirez S."/>
            <person name="Gonzalez V."/>
            <person name="Bustos P."/>
            <person name="Fernandez-Vazquez J.L."/>
            <person name="Santamaria R.I."/>
            <person name="Arellano J."/>
            <person name="Cevallos M.A."/>
            <person name="Davila G."/>
        </authorList>
    </citation>
    <scope>NUCLEOTIDE SEQUENCE [LARGE SCALE GENOMIC DNA]</scope>
    <source>
        <strain>cv. Negro Jamapa</strain>
    </source>
</reference>
<reference key="2">
    <citation type="submission" date="2007-10" db="EMBL/GenBank/DDBJ databases">
        <title>Complete nucleotide sequence of the plastid genome of the common bean, Phaseolus vulgaris.</title>
        <authorList>
            <person name="Moore M.J."/>
            <person name="Triplett E.W."/>
            <person name="Broughton W.J."/>
            <person name="Soltis P.S."/>
            <person name="Soltis D.E."/>
        </authorList>
    </citation>
    <scope>NUCLEOTIDE SEQUENCE [LARGE SCALE GENOMIC DNA]</scope>
</reference>
<proteinExistence type="inferred from homology"/>
<gene>
    <name evidence="2" type="primary">petA</name>
</gene>